<proteinExistence type="evidence at transcript level"/>
<protein>
    <recommendedName>
        <fullName>Antigen peptide transporter 1</fullName>
        <shortName>APT1</shortName>
        <ecNumber evidence="2">7.4.2.14</ecNumber>
    </recommendedName>
    <alternativeName>
        <fullName>ATP-binding cassette sub-family B member 2</fullName>
    </alternativeName>
    <alternativeName>
        <fullName>Peptide transporter TAP1</fullName>
    </alternativeName>
</protein>
<sequence>MASSRCPAPRGCRCLPGASLAWLGTVLLFLADWVLLRTALPRIFSLLVPTALPLLRVWAVGLSRWAVLWLGACGVLRATVGSKSENAGAQGWLAALEPLAAALGLALPGLALFRELISWGAPGSADSTRLLHWGSHPSAFVVSYAAALPAAALWHKLGSLWVPGGQGGSGNPVRRLLGCLGSETRRLSLFLVLVVLSSLGEMAIPFFTGRLTDWILQDGSADTFTRNLTLMSILTIASAVLEFVGDGIYNNTMGHVHSHLQGEVFGAVLRQETEFFQQNQTGNITSRVTEDTSTLSDSLSENLSLFLWYLVRGLCLLGIMLWGSVSLTMVTLVTLPLLFLLPKKVGKWYQLLEVQVRESLAKSSQVAIEALSAMPTVRSFANEEGEAQKFREKLQEIKTLNQKEAVAYAVNSWTTSISGMLLKVGILYIGGQLVTSGAVSSGNLVTFVLYQMQFTQAVEVLLSIYPRVQKAVGSSEKIFEYLDRTPRCPPSGLLTPLHLEGLVQFQDVSFAYPNRPDVLVLQGLTFTLHPGEVTALVGPNGSGKSTVAALLQNLYQPTGGQLLLDGKPLPQYEHRYLHRQVAAVGQEPQVFGRSLQENIAYGLTQKPTMEEITAAAVKCGAHSFISGLPQGYDTEVGEAGSQLSGGQRQAVALARALIRKPCVLILDDATSALDANSQLQVEQLLYESPERYSRSVLLITQHLSLVEQADHILFLEGGAIREGGTHQQLMEKKGCYWAMVQAPADAPE</sequence>
<gene>
    <name type="primary">TAP1</name>
</gene>
<comment type="function">
    <text evidence="2">ABC transporter associated with antigen processing. In complex with TAP2 mediates unidirectional translocation of peptide antigens from cytosol to endoplasmic reticulum (ER) for loading onto MHC class I (MHCI) molecules. Uses the chemical energy of ATP to export peptides against the concentration gradient. During the transport cycle alternates between 'inward-facing' state with peptide binding site facing the cytosol to 'outward-facing' state with peptide binding site facing the ER lumen. Peptide antigen binding to ATP-loaded TAP1-TAP2 induces a switch to hydrolysis-competent 'outward-facing' conformation ready for peptide loading onto nascent MHCI molecules. Subsequently ATP hydrolysis resets the transporter to the 'inward facing' state for a new cycle. As a component of the peptide loading complex (PLC), acts as a molecular scaffold essential for peptide-MHCI assembly and antigen presentation.</text>
</comment>
<comment type="catalytic activity">
    <reaction evidence="2">
        <text>a peptide antigen(in) + ATP + H2O = a peptide antigen(out) + ADP + phosphate + H(+)</text>
        <dbReference type="Rhea" id="RHEA:65972"/>
        <dbReference type="Rhea" id="RHEA-COMP:16941"/>
        <dbReference type="ChEBI" id="CHEBI:15377"/>
        <dbReference type="ChEBI" id="CHEBI:15378"/>
        <dbReference type="ChEBI" id="CHEBI:30616"/>
        <dbReference type="ChEBI" id="CHEBI:43474"/>
        <dbReference type="ChEBI" id="CHEBI:166823"/>
        <dbReference type="ChEBI" id="CHEBI:456216"/>
        <dbReference type="EC" id="7.4.2.14"/>
    </reaction>
    <physiologicalReaction direction="left-to-right" evidence="2">
        <dbReference type="Rhea" id="RHEA:65973"/>
    </physiologicalReaction>
</comment>
<comment type="cofactor">
    <cofactor evidence="2">
        <name>Mg(2+)</name>
        <dbReference type="ChEBI" id="CHEBI:18420"/>
    </cofactor>
</comment>
<comment type="subunit">
    <text evidence="2">Heterodimer of TAP1 and TAP2 (TAP1-TAP2). A component of the peptide loading complex (PLC), interacts via TAPBP with MHCI heterodimer; this interaction mediates peptide-MHCI assembly. Interacts with PSMB5 and PSMB8.</text>
</comment>
<comment type="subcellular location">
    <subcellularLocation>
        <location evidence="2">Endoplasmic reticulum membrane</location>
        <topology evidence="3">Multi-pass membrane protein</topology>
    </subcellularLocation>
    <text>The transmembrane segments seem to form a pore in the membrane.</text>
</comment>
<comment type="domain">
    <text evidence="2">The peptide-binding site is shared between the cytoplasmic loops of TAP1 and TAP2.</text>
</comment>
<comment type="domain">
    <text evidence="1">The nucleotide-binding domain (NBD) mediates ATP hydrolysis coupled to peptide translocation. Two ATP molecules are accommodated at distinct nucleotide binding sites (NBS) at TAP1-TAP2 dimer interface. Each NBS is formed by Walker A (GxxGxGKST) and Q-loop motifs from NBD of one subunit, while the NBD from the second subunit completes the active site by contributing the C loop motif (LSGGQ). Each ATP molecule is coordinated via the beta- and gamma-phosphates to a Mg2+ ion, which is necessary for ATP hydrolysis.</text>
</comment>
<comment type="similarity">
    <text evidence="7">Belongs to the ABC transporter superfamily. ABCB family. MHC peptide exporter (TC 3.A.1.209) subfamily.</text>
</comment>
<reference key="1">
    <citation type="journal article" date="1996" name="Hum. Immunol.">
        <title>Transporter associated with antigen-processing-1 (TAP1) alleles in Gorilla gorilla: diversification of the locus postspeciation.</title>
        <authorList>
            <person name="Laud P.R."/>
            <person name="Loflin P.T."/>
            <person name="Jeevan A."/>
            <person name="Lawlor D.A."/>
        </authorList>
    </citation>
    <scope>NUCLEOTIDE SEQUENCE [MRNA]</scope>
    <scope>VARIANTS VAL-233; MET-273; SER-619 AND ARG-629</scope>
    <source>
        <strain>Isolate Machi</strain>
        <strain>Isolate Oko</strain>
    </source>
</reference>
<accession>Q28433</accession>
<accession>Q28432</accession>
<accession>Q28434</accession>
<feature type="chain" id="PRO_0000093325" description="Antigen peptide transporter 1">
    <location>
        <begin position="1"/>
        <end position="748"/>
    </location>
</feature>
<feature type="topological domain" description="Cytoplasmic" evidence="3">
    <location>
        <begin position="1"/>
        <end position="15"/>
    </location>
</feature>
<feature type="transmembrane region" description="Helical; Name=1" evidence="5">
    <location>
        <begin position="16"/>
        <end position="36"/>
    </location>
</feature>
<feature type="topological domain" description="Lumenal" evidence="3">
    <location>
        <begin position="37"/>
        <end position="53"/>
    </location>
</feature>
<feature type="transmembrane region" description="Helical; Name=2" evidence="5">
    <location>
        <begin position="54"/>
        <end position="76"/>
    </location>
</feature>
<feature type="topological domain" description="Cytoplasmic" evidence="3">
    <location>
        <begin position="77"/>
        <end position="92"/>
    </location>
</feature>
<feature type="transmembrane region" description="Helical; Name=3" evidence="5">
    <location>
        <begin position="93"/>
        <end position="113"/>
    </location>
</feature>
<feature type="topological domain" description="Lumenal" evidence="3">
    <location>
        <begin position="114"/>
        <end position="133"/>
    </location>
</feature>
<feature type="transmembrane region" description="Helical; Name=4" evidence="5">
    <location>
        <begin position="134"/>
        <end position="154"/>
    </location>
</feature>
<feature type="topological domain" description="Cytoplasmic" evidence="3">
    <location>
        <begin position="155"/>
        <end position="186"/>
    </location>
</feature>
<feature type="transmembrane region" description="Helical; Name=5" evidence="5">
    <location>
        <begin position="187"/>
        <end position="207"/>
    </location>
</feature>
<feature type="topological domain" description="Lumenal" evidence="3">
    <location>
        <begin position="208"/>
        <end position="227"/>
    </location>
</feature>
<feature type="transmembrane region" description="Helical; Name=6" evidence="5">
    <location>
        <begin position="228"/>
        <end position="248"/>
    </location>
</feature>
<feature type="topological domain" description="Cytoplasmic" evidence="3">
    <location>
        <begin position="249"/>
        <end position="298"/>
    </location>
</feature>
<feature type="transmembrane region" description="Helical; Name=7" evidence="5">
    <location>
        <begin position="299"/>
        <end position="319"/>
    </location>
</feature>
<feature type="topological domain" description="Lumenal" evidence="3">
    <location>
        <begin position="320"/>
        <end position="328"/>
    </location>
</feature>
<feature type="transmembrane region" description="Helical; Name=8" evidence="5">
    <location>
        <begin position="329"/>
        <end position="349"/>
    </location>
</feature>
<feature type="topological domain" description="Cytoplasmic" evidence="3">
    <location>
        <begin position="350"/>
        <end position="418"/>
    </location>
</feature>
<feature type="transmembrane region" description="Helical; Name=9" evidence="5">
    <location>
        <begin position="419"/>
        <end position="439"/>
    </location>
</feature>
<feature type="topological domain" description="Lumenal" evidence="3">
    <location>
        <begin position="440"/>
        <end position="443"/>
    </location>
</feature>
<feature type="transmembrane region" description="Helical; Name=10" evidence="5">
    <location>
        <begin position="444"/>
        <end position="464"/>
    </location>
</feature>
<feature type="topological domain" description="Cytoplasmic" evidence="3">
    <location>
        <begin position="465"/>
        <end position="748"/>
    </location>
</feature>
<feature type="domain" description="ABC transmembrane type-1" evidence="5">
    <location>
        <begin position="187"/>
        <end position="470"/>
    </location>
</feature>
<feature type="domain" description="ABC transporter" evidence="4">
    <location>
        <begin position="503"/>
        <end position="742"/>
    </location>
</feature>
<feature type="region of interest" description="Part of the peptide-binding site" evidence="2">
    <location>
        <begin position="375"/>
        <end position="420"/>
    </location>
</feature>
<feature type="region of interest" description="Part of the peptide-binding site" evidence="2">
    <location>
        <begin position="453"/>
        <end position="487"/>
    </location>
</feature>
<feature type="binding site" evidence="1 4">
    <location>
        <begin position="538"/>
        <end position="546"/>
    </location>
    <ligand>
        <name>ATP</name>
        <dbReference type="ChEBI" id="CHEBI:30616"/>
    </ligand>
</feature>
<feature type="binding site" evidence="2">
    <location>
        <position position="545"/>
    </location>
    <ligand>
        <name>Mg(2+)</name>
        <dbReference type="ChEBI" id="CHEBI:18420"/>
    </ligand>
</feature>
<feature type="binding site" evidence="1">
    <location>
        <begin position="641"/>
        <end position="647"/>
    </location>
    <ligand>
        <name>ATP</name>
        <dbReference type="ChEBI" id="CHEBI:30616"/>
    </ligand>
</feature>
<feature type="binding site" evidence="1">
    <location>
        <position position="701"/>
    </location>
    <ligand>
        <name>ATP</name>
        <dbReference type="ChEBI" id="CHEBI:30616"/>
    </ligand>
</feature>
<feature type="site" description="Inter-subunit salt bridge with TAPBP" evidence="2">
    <location>
        <position position="32"/>
    </location>
</feature>
<feature type="sequence variant" id="VAR_019127" description="In allele Gogo-TAP1b." evidence="6">
    <original>I</original>
    <variation>V</variation>
    <location>
        <position position="233"/>
    </location>
</feature>
<feature type="sequence variant" id="VAR_019128" description="In allele Gogo-TAP1b." evidence="6">
    <original>T</original>
    <variation>M</variation>
    <location>
        <position position="273"/>
    </location>
</feature>
<feature type="sequence variant" id="VAR_019129" description="In allele Gogo-TAP1b." evidence="6">
    <original>C</original>
    <variation>S</variation>
    <location>
        <position position="619"/>
    </location>
</feature>
<feature type="sequence variant" id="VAR_019130" description="In allele Gogo-TAP1c." evidence="6">
    <original>P</original>
    <variation>R</variation>
    <location>
        <position position="629"/>
    </location>
</feature>
<organism>
    <name type="scientific">Gorilla gorilla gorilla</name>
    <name type="common">Western lowland gorilla</name>
    <dbReference type="NCBI Taxonomy" id="9595"/>
    <lineage>
        <taxon>Eukaryota</taxon>
        <taxon>Metazoa</taxon>
        <taxon>Chordata</taxon>
        <taxon>Craniata</taxon>
        <taxon>Vertebrata</taxon>
        <taxon>Euteleostomi</taxon>
        <taxon>Mammalia</taxon>
        <taxon>Eutheria</taxon>
        <taxon>Euarchontoglires</taxon>
        <taxon>Primates</taxon>
        <taxon>Haplorrhini</taxon>
        <taxon>Catarrhini</taxon>
        <taxon>Hominidae</taxon>
        <taxon>Gorilla</taxon>
    </lineage>
</organism>
<evidence type="ECO:0000250" key="1">
    <source>
        <dbReference type="UniProtKB" id="P36370"/>
    </source>
</evidence>
<evidence type="ECO:0000250" key="2">
    <source>
        <dbReference type="UniProtKB" id="Q03518"/>
    </source>
</evidence>
<evidence type="ECO:0000255" key="3"/>
<evidence type="ECO:0000255" key="4">
    <source>
        <dbReference type="PROSITE-ProRule" id="PRU00434"/>
    </source>
</evidence>
<evidence type="ECO:0000255" key="5">
    <source>
        <dbReference type="PROSITE-ProRule" id="PRU00441"/>
    </source>
</evidence>
<evidence type="ECO:0000269" key="6">
    <source>
    </source>
</evidence>
<evidence type="ECO:0000305" key="7"/>
<keyword id="KW-1064">Adaptive immunity</keyword>
<keyword id="KW-0067">ATP-binding</keyword>
<keyword id="KW-0256">Endoplasmic reticulum</keyword>
<keyword id="KW-0391">Immunity</keyword>
<keyword id="KW-0460">Magnesium</keyword>
<keyword id="KW-0472">Membrane</keyword>
<keyword id="KW-0479">Metal-binding</keyword>
<keyword id="KW-0547">Nucleotide-binding</keyword>
<keyword id="KW-0571">Peptide transport</keyword>
<keyword id="KW-0653">Protein transport</keyword>
<keyword id="KW-1185">Reference proteome</keyword>
<keyword id="KW-1278">Translocase</keyword>
<keyword id="KW-0812">Transmembrane</keyword>
<keyword id="KW-1133">Transmembrane helix</keyword>
<keyword id="KW-0813">Transport</keyword>
<name>TAP1_GORGO</name>
<dbReference type="EC" id="7.4.2.14" evidence="2"/>
<dbReference type="EMBL" id="L76468">
    <property type="protein sequence ID" value="AAA91199.1"/>
    <property type="molecule type" value="mRNA"/>
</dbReference>
<dbReference type="EMBL" id="L76469">
    <property type="protein sequence ID" value="AAA91200.1"/>
    <property type="molecule type" value="mRNA"/>
</dbReference>
<dbReference type="EMBL" id="L76470">
    <property type="protein sequence ID" value="AAA91198.1"/>
    <property type="molecule type" value="mRNA"/>
</dbReference>
<dbReference type="SMR" id="Q28433"/>
<dbReference type="FunCoup" id="Q28433">
    <property type="interactions" value="482"/>
</dbReference>
<dbReference type="STRING" id="9593.ENSGGOP00000010681"/>
<dbReference type="eggNOG" id="KOG0058">
    <property type="taxonomic scope" value="Eukaryota"/>
</dbReference>
<dbReference type="InParanoid" id="Q28433"/>
<dbReference type="Proteomes" id="UP000001519">
    <property type="component" value="Unplaced"/>
</dbReference>
<dbReference type="GO" id="GO:0016020">
    <property type="term" value="C:membrane"/>
    <property type="evidence" value="ECO:0000318"/>
    <property type="project" value="GO_Central"/>
</dbReference>
<dbReference type="GO" id="GO:0042824">
    <property type="term" value="C:MHC class I peptide loading complex"/>
    <property type="evidence" value="ECO:0000318"/>
    <property type="project" value="GO_Central"/>
</dbReference>
<dbReference type="GO" id="GO:0015433">
    <property type="term" value="F:ABC-type peptide antigen transporter activity"/>
    <property type="evidence" value="ECO:0000318"/>
    <property type="project" value="GO_Central"/>
</dbReference>
<dbReference type="GO" id="GO:0005524">
    <property type="term" value="F:ATP binding"/>
    <property type="evidence" value="ECO:0007669"/>
    <property type="project" value="UniProtKB-KW"/>
</dbReference>
<dbReference type="GO" id="GO:0016887">
    <property type="term" value="F:ATP hydrolysis activity"/>
    <property type="evidence" value="ECO:0007669"/>
    <property type="project" value="InterPro"/>
</dbReference>
<dbReference type="GO" id="GO:0046872">
    <property type="term" value="F:metal ion binding"/>
    <property type="evidence" value="ECO:0007669"/>
    <property type="project" value="UniProtKB-KW"/>
</dbReference>
<dbReference type="GO" id="GO:0046978">
    <property type="term" value="F:TAP1 binding"/>
    <property type="evidence" value="ECO:0000318"/>
    <property type="project" value="GO_Central"/>
</dbReference>
<dbReference type="GO" id="GO:0002250">
    <property type="term" value="P:adaptive immune response"/>
    <property type="evidence" value="ECO:0007669"/>
    <property type="project" value="UniProtKB-KW"/>
</dbReference>
<dbReference type="GO" id="GO:0019885">
    <property type="term" value="P:antigen processing and presentation of endogenous peptide antigen via MHC class I"/>
    <property type="evidence" value="ECO:0000318"/>
    <property type="project" value="GO_Central"/>
</dbReference>
<dbReference type="GO" id="GO:0015031">
    <property type="term" value="P:protein transport"/>
    <property type="evidence" value="ECO:0007669"/>
    <property type="project" value="UniProtKB-KW"/>
</dbReference>
<dbReference type="GO" id="GO:0055085">
    <property type="term" value="P:transmembrane transport"/>
    <property type="evidence" value="ECO:0000318"/>
    <property type="project" value="GO_Central"/>
</dbReference>
<dbReference type="CDD" id="cd18589">
    <property type="entry name" value="ABC_6TM_TAP1"/>
    <property type="match status" value="1"/>
</dbReference>
<dbReference type="CDD" id="cd03248">
    <property type="entry name" value="ABCC_TAP"/>
    <property type="match status" value="1"/>
</dbReference>
<dbReference type="FunFam" id="3.40.50.300:FF:000140">
    <property type="entry name" value="Lipid A export ATP-binding/permease protein MsbA"/>
    <property type="match status" value="1"/>
</dbReference>
<dbReference type="FunFam" id="1.20.1560.10:FF:000068">
    <property type="entry name" value="Transporter 1 ATP-binding cassette sub-family B"/>
    <property type="match status" value="1"/>
</dbReference>
<dbReference type="Gene3D" id="1.20.1560.10">
    <property type="entry name" value="ABC transporter type 1, transmembrane domain"/>
    <property type="match status" value="1"/>
</dbReference>
<dbReference type="Gene3D" id="3.40.50.300">
    <property type="entry name" value="P-loop containing nucleotide triphosphate hydrolases"/>
    <property type="match status" value="1"/>
</dbReference>
<dbReference type="InterPro" id="IPR003593">
    <property type="entry name" value="AAA+_ATPase"/>
</dbReference>
<dbReference type="InterPro" id="IPR011527">
    <property type="entry name" value="ABC1_TM_dom"/>
</dbReference>
<dbReference type="InterPro" id="IPR036640">
    <property type="entry name" value="ABC1_TM_sf"/>
</dbReference>
<dbReference type="InterPro" id="IPR013305">
    <property type="entry name" value="ABC_Tap-like"/>
</dbReference>
<dbReference type="InterPro" id="IPR003439">
    <property type="entry name" value="ABC_transporter-like_ATP-bd"/>
</dbReference>
<dbReference type="InterPro" id="IPR017871">
    <property type="entry name" value="ABC_transporter-like_CS"/>
</dbReference>
<dbReference type="InterPro" id="IPR027417">
    <property type="entry name" value="P-loop_NTPase"/>
</dbReference>
<dbReference type="InterPro" id="IPR039421">
    <property type="entry name" value="Type_1_exporter"/>
</dbReference>
<dbReference type="NCBIfam" id="TIGR00958">
    <property type="entry name" value="3a01208"/>
    <property type="match status" value="1"/>
</dbReference>
<dbReference type="PANTHER" id="PTHR43394:SF13">
    <property type="entry name" value="ANTIGEN PEPTIDE TRANSPORTER 1"/>
    <property type="match status" value="1"/>
</dbReference>
<dbReference type="PANTHER" id="PTHR43394">
    <property type="entry name" value="ATP-DEPENDENT PERMEASE MDL1, MITOCHONDRIAL"/>
    <property type="match status" value="1"/>
</dbReference>
<dbReference type="Pfam" id="PF00664">
    <property type="entry name" value="ABC_membrane"/>
    <property type="match status" value="1"/>
</dbReference>
<dbReference type="Pfam" id="PF00005">
    <property type="entry name" value="ABC_tran"/>
    <property type="match status" value="1"/>
</dbReference>
<dbReference type="PIRSF" id="PIRSF002773">
    <property type="entry name" value="ABC_prm/ATPase_B"/>
    <property type="match status" value="1"/>
</dbReference>
<dbReference type="PRINTS" id="PR01896">
    <property type="entry name" value="TAP1PROTEIN"/>
</dbReference>
<dbReference type="SMART" id="SM00382">
    <property type="entry name" value="AAA"/>
    <property type="match status" value="1"/>
</dbReference>
<dbReference type="SUPFAM" id="SSF90123">
    <property type="entry name" value="ABC transporter transmembrane region"/>
    <property type="match status" value="1"/>
</dbReference>
<dbReference type="SUPFAM" id="SSF52540">
    <property type="entry name" value="P-loop containing nucleoside triphosphate hydrolases"/>
    <property type="match status" value="1"/>
</dbReference>
<dbReference type="PROSITE" id="PS50929">
    <property type="entry name" value="ABC_TM1F"/>
    <property type="match status" value="1"/>
</dbReference>
<dbReference type="PROSITE" id="PS00211">
    <property type="entry name" value="ABC_TRANSPORTER_1"/>
    <property type="match status" value="1"/>
</dbReference>
<dbReference type="PROSITE" id="PS50893">
    <property type="entry name" value="ABC_TRANSPORTER_2"/>
    <property type="match status" value="1"/>
</dbReference>